<name>FABH_RICTY</name>
<dbReference type="EC" id="2.3.1.180" evidence="1"/>
<dbReference type="EMBL" id="AE017197">
    <property type="protein sequence ID" value="AAU04215.1"/>
    <property type="molecule type" value="Genomic_DNA"/>
</dbReference>
<dbReference type="RefSeq" id="WP_011191190.1">
    <property type="nucleotide sequence ID" value="NC_006142.1"/>
</dbReference>
<dbReference type="SMR" id="Q68VX7"/>
<dbReference type="KEGG" id="rty:RT0759"/>
<dbReference type="eggNOG" id="COG0332">
    <property type="taxonomic scope" value="Bacteria"/>
</dbReference>
<dbReference type="HOGENOM" id="CLU_039592_4_1_5"/>
<dbReference type="OrthoDB" id="9815506at2"/>
<dbReference type="UniPathway" id="UPA00094"/>
<dbReference type="Proteomes" id="UP000000604">
    <property type="component" value="Chromosome"/>
</dbReference>
<dbReference type="GO" id="GO:0005737">
    <property type="term" value="C:cytoplasm"/>
    <property type="evidence" value="ECO:0007669"/>
    <property type="project" value="UniProtKB-SubCell"/>
</dbReference>
<dbReference type="GO" id="GO:0004315">
    <property type="term" value="F:3-oxoacyl-[acyl-carrier-protein] synthase activity"/>
    <property type="evidence" value="ECO:0007669"/>
    <property type="project" value="InterPro"/>
</dbReference>
<dbReference type="GO" id="GO:0033818">
    <property type="term" value="F:beta-ketoacyl-acyl-carrier-protein synthase III activity"/>
    <property type="evidence" value="ECO:0007669"/>
    <property type="project" value="UniProtKB-UniRule"/>
</dbReference>
<dbReference type="GO" id="GO:0006633">
    <property type="term" value="P:fatty acid biosynthetic process"/>
    <property type="evidence" value="ECO:0007669"/>
    <property type="project" value="UniProtKB-UniRule"/>
</dbReference>
<dbReference type="GO" id="GO:0044550">
    <property type="term" value="P:secondary metabolite biosynthetic process"/>
    <property type="evidence" value="ECO:0007669"/>
    <property type="project" value="TreeGrafter"/>
</dbReference>
<dbReference type="CDD" id="cd00830">
    <property type="entry name" value="KAS_III"/>
    <property type="match status" value="1"/>
</dbReference>
<dbReference type="FunFam" id="3.40.47.10:FF:000004">
    <property type="entry name" value="3-oxoacyl-[acyl-carrier-protein] synthase 3"/>
    <property type="match status" value="1"/>
</dbReference>
<dbReference type="Gene3D" id="3.40.47.10">
    <property type="match status" value="1"/>
</dbReference>
<dbReference type="HAMAP" id="MF_01815">
    <property type="entry name" value="FabH"/>
    <property type="match status" value="1"/>
</dbReference>
<dbReference type="InterPro" id="IPR013747">
    <property type="entry name" value="ACP_syn_III_C"/>
</dbReference>
<dbReference type="InterPro" id="IPR013751">
    <property type="entry name" value="ACP_syn_III_N"/>
</dbReference>
<dbReference type="InterPro" id="IPR004655">
    <property type="entry name" value="FabH"/>
</dbReference>
<dbReference type="InterPro" id="IPR016039">
    <property type="entry name" value="Thiolase-like"/>
</dbReference>
<dbReference type="NCBIfam" id="TIGR00747">
    <property type="entry name" value="fabH"/>
    <property type="match status" value="1"/>
</dbReference>
<dbReference type="NCBIfam" id="NF006829">
    <property type="entry name" value="PRK09352.1"/>
    <property type="match status" value="1"/>
</dbReference>
<dbReference type="PANTHER" id="PTHR34069">
    <property type="entry name" value="3-OXOACYL-[ACYL-CARRIER-PROTEIN] SYNTHASE 3"/>
    <property type="match status" value="1"/>
</dbReference>
<dbReference type="PANTHER" id="PTHR34069:SF2">
    <property type="entry name" value="BETA-KETOACYL-[ACYL-CARRIER-PROTEIN] SYNTHASE III"/>
    <property type="match status" value="1"/>
</dbReference>
<dbReference type="Pfam" id="PF08545">
    <property type="entry name" value="ACP_syn_III"/>
    <property type="match status" value="1"/>
</dbReference>
<dbReference type="Pfam" id="PF08541">
    <property type="entry name" value="ACP_syn_III_C"/>
    <property type="match status" value="1"/>
</dbReference>
<dbReference type="SUPFAM" id="SSF53901">
    <property type="entry name" value="Thiolase-like"/>
    <property type="match status" value="1"/>
</dbReference>
<gene>
    <name evidence="1" type="primary">fabH</name>
    <name type="ordered locus">RT0759</name>
</gene>
<feature type="chain" id="PRO_0000110463" description="Beta-ketoacyl-[acyl-carrier-protein] synthase III">
    <location>
        <begin position="1"/>
        <end position="317"/>
    </location>
</feature>
<feature type="region of interest" description="ACP-binding" evidence="1">
    <location>
        <begin position="245"/>
        <end position="249"/>
    </location>
</feature>
<feature type="active site" evidence="1">
    <location>
        <position position="112"/>
    </location>
</feature>
<feature type="active site" evidence="1">
    <location>
        <position position="244"/>
    </location>
</feature>
<feature type="active site" evidence="1">
    <location>
        <position position="274"/>
    </location>
</feature>
<comment type="function">
    <text evidence="1">Catalyzes the condensation reaction of fatty acid synthesis by the addition to an acyl acceptor of two carbons from malonyl-ACP. Catalyzes the first condensation reaction which initiates fatty acid synthesis and may therefore play a role in governing the total rate of fatty acid production. Possesses both acetoacetyl-ACP synthase and acetyl transacylase activities. Its substrate specificity determines the biosynthesis of branched-chain and/or straight-chain of fatty acids.</text>
</comment>
<comment type="catalytic activity">
    <reaction evidence="1">
        <text>malonyl-[ACP] + acetyl-CoA + H(+) = 3-oxobutanoyl-[ACP] + CO2 + CoA</text>
        <dbReference type="Rhea" id="RHEA:12080"/>
        <dbReference type="Rhea" id="RHEA-COMP:9623"/>
        <dbReference type="Rhea" id="RHEA-COMP:9625"/>
        <dbReference type="ChEBI" id="CHEBI:15378"/>
        <dbReference type="ChEBI" id="CHEBI:16526"/>
        <dbReference type="ChEBI" id="CHEBI:57287"/>
        <dbReference type="ChEBI" id="CHEBI:57288"/>
        <dbReference type="ChEBI" id="CHEBI:78449"/>
        <dbReference type="ChEBI" id="CHEBI:78450"/>
        <dbReference type="EC" id="2.3.1.180"/>
    </reaction>
</comment>
<comment type="pathway">
    <text evidence="1">Lipid metabolism; fatty acid biosynthesis.</text>
</comment>
<comment type="subunit">
    <text evidence="1">Homodimer.</text>
</comment>
<comment type="subcellular location">
    <subcellularLocation>
        <location evidence="1">Cytoplasm</location>
    </subcellularLocation>
</comment>
<comment type="domain">
    <text evidence="1">The last Arg residue of the ACP-binding site is essential for the weak association between ACP/AcpP and FabH.</text>
</comment>
<comment type="similarity">
    <text evidence="1">Belongs to the thiolase-like superfamily. FabH family.</text>
</comment>
<accession>Q68VX7</accession>
<protein>
    <recommendedName>
        <fullName evidence="1">Beta-ketoacyl-[acyl-carrier-protein] synthase III</fullName>
        <shortName evidence="1">Beta-ketoacyl-ACP synthase III</shortName>
        <shortName evidence="1">KAS III</shortName>
        <ecNumber evidence="1">2.3.1.180</ecNumber>
    </recommendedName>
    <alternativeName>
        <fullName evidence="1">3-oxoacyl-[acyl-carrier-protein] synthase 3</fullName>
    </alternativeName>
    <alternativeName>
        <fullName evidence="1">3-oxoacyl-[acyl-carrier-protein] synthase III</fullName>
    </alternativeName>
</protein>
<evidence type="ECO:0000255" key="1">
    <source>
        <dbReference type="HAMAP-Rule" id="MF_01815"/>
    </source>
</evidence>
<reference key="1">
    <citation type="journal article" date="2004" name="J. Bacteriol.">
        <title>Complete genome sequence of Rickettsia typhi and comparison with sequences of other Rickettsiae.</title>
        <authorList>
            <person name="McLeod M.P."/>
            <person name="Qin X."/>
            <person name="Karpathy S.E."/>
            <person name="Gioia J."/>
            <person name="Highlander S.K."/>
            <person name="Fox G.E."/>
            <person name="McNeill T.Z."/>
            <person name="Jiang H."/>
            <person name="Muzny D."/>
            <person name="Jacob L.S."/>
            <person name="Hawes A.C."/>
            <person name="Sodergren E."/>
            <person name="Gill R."/>
            <person name="Hume J."/>
            <person name="Morgan M."/>
            <person name="Fan G."/>
            <person name="Amin A.G."/>
            <person name="Gibbs R.A."/>
            <person name="Hong C."/>
            <person name="Yu X.-J."/>
            <person name="Walker D.H."/>
            <person name="Weinstock G.M."/>
        </authorList>
    </citation>
    <scope>NUCLEOTIDE SEQUENCE [LARGE SCALE GENOMIC DNA]</scope>
    <source>
        <strain>ATCC VR-144 / Wilmington</strain>
    </source>
</reference>
<keyword id="KW-0012">Acyltransferase</keyword>
<keyword id="KW-0963">Cytoplasm</keyword>
<keyword id="KW-0275">Fatty acid biosynthesis</keyword>
<keyword id="KW-0276">Fatty acid metabolism</keyword>
<keyword id="KW-0444">Lipid biosynthesis</keyword>
<keyword id="KW-0443">Lipid metabolism</keyword>
<keyword id="KW-0511">Multifunctional enzyme</keyword>
<keyword id="KW-0808">Transferase</keyword>
<sequence>MTCKIIGSGGYLPQKIISNDELTKFVDTNDKWIRTRTGIFQRHIAGDTEYTSHLALKSAQKAIEDAMISVDDIDLIITCTTTPDNSFPSVATKLHGYLGLTNIPSFDLQAVCAGFIYGLQLTNSLIVSGKYKTILLIGAEKMTSLLDWNDRSTCVLFGDGAGSVILQRSNDESGLIDSNIFSSGTDYEILYTSGGTSMNGTSGKIVMQGQKLFRHAIAKMLQSIEDLLHANQFSVSDIDYFIPHQANIRIINKLAELLNIEEHKVVKTVEKHANCSAASIPLALSTLKESGKIKKGDILLFSAIGAGLTWGSALIRW</sequence>
<proteinExistence type="inferred from homology"/>
<organism>
    <name type="scientific">Rickettsia typhi (strain ATCC VR-144 / Wilmington)</name>
    <dbReference type="NCBI Taxonomy" id="257363"/>
    <lineage>
        <taxon>Bacteria</taxon>
        <taxon>Pseudomonadati</taxon>
        <taxon>Pseudomonadota</taxon>
        <taxon>Alphaproteobacteria</taxon>
        <taxon>Rickettsiales</taxon>
        <taxon>Rickettsiaceae</taxon>
        <taxon>Rickettsieae</taxon>
        <taxon>Rickettsia</taxon>
        <taxon>typhus group</taxon>
    </lineage>
</organism>